<sequence>MHRWSRLFVPTLREAPSDAEVASHKFLLRSGYIRQLGAGIYSYLLFGQRSINKIVGIVREEMDKIGQEFLLPAIHPADLWRESGRWTVMGDNMFRLKDRKGAELCLGMTHEEVMTDIARNELRSYKQLPQIWYQIQNKFRDEPRPRSGLLRVRQFLMKDSYSFDLNQAGLDKSYDLHDAAYRAIFTRCGLNFVVVEADSGAMGGSGSQEFMVYTDAGEDLIASCAKCGYAANMEKATSKLAPVEELAATGDGQPELISTPGQAAIADICKFLGMQPHSDIKCVAYMAEVPSEDGKTSTWEPVAAFLRGDHFVNETKLLAVVGATELRPMQAEELEKWMHGPAGYLGPVGLTPAKKLRDGSLNVVLDLGLEGRRNLVAGANKLDYHYRNVTPGRDFTWTVAADIRNAAEGEGCPVCGEPLKVAKAVEIGHIFKLGTKYTESMGARVLDENGKEVMPVMGCYGIGIERILTASIEQNNDANGFWLPRSIAPFDVVVTITNMADETLRQAGEALAAQLEAAGYDVLLDDREERAGVKFKDADLVGIPYRFNVGKKTLEGKTELVTRATASSQDVALDAAVEALKALTA</sequence>
<dbReference type="EC" id="6.1.1.15" evidence="1"/>
<dbReference type="EMBL" id="CP001472">
    <property type="protein sequence ID" value="ACO33322.1"/>
    <property type="molecule type" value="Genomic_DNA"/>
</dbReference>
<dbReference type="RefSeq" id="WP_015897889.1">
    <property type="nucleotide sequence ID" value="NC_012483.1"/>
</dbReference>
<dbReference type="SMR" id="C1F3P3"/>
<dbReference type="FunCoup" id="C1F3P3">
    <property type="interactions" value="533"/>
</dbReference>
<dbReference type="STRING" id="240015.ACP_2832"/>
<dbReference type="KEGG" id="aca:ACP_2832"/>
<dbReference type="eggNOG" id="COG0442">
    <property type="taxonomic scope" value="Bacteria"/>
</dbReference>
<dbReference type="HOGENOM" id="CLU_016739_0_0_0"/>
<dbReference type="InParanoid" id="C1F3P3"/>
<dbReference type="OrthoDB" id="9809052at2"/>
<dbReference type="Proteomes" id="UP000002207">
    <property type="component" value="Chromosome"/>
</dbReference>
<dbReference type="GO" id="GO:0005829">
    <property type="term" value="C:cytosol"/>
    <property type="evidence" value="ECO:0007669"/>
    <property type="project" value="TreeGrafter"/>
</dbReference>
<dbReference type="GO" id="GO:0002161">
    <property type="term" value="F:aminoacyl-tRNA deacylase activity"/>
    <property type="evidence" value="ECO:0007669"/>
    <property type="project" value="InterPro"/>
</dbReference>
<dbReference type="GO" id="GO:0005524">
    <property type="term" value="F:ATP binding"/>
    <property type="evidence" value="ECO:0007669"/>
    <property type="project" value="UniProtKB-UniRule"/>
</dbReference>
<dbReference type="GO" id="GO:0004827">
    <property type="term" value="F:proline-tRNA ligase activity"/>
    <property type="evidence" value="ECO:0007669"/>
    <property type="project" value="UniProtKB-UniRule"/>
</dbReference>
<dbReference type="GO" id="GO:0006433">
    <property type="term" value="P:prolyl-tRNA aminoacylation"/>
    <property type="evidence" value="ECO:0007669"/>
    <property type="project" value="UniProtKB-UniRule"/>
</dbReference>
<dbReference type="CDD" id="cd04334">
    <property type="entry name" value="ProRS-INS"/>
    <property type="match status" value="1"/>
</dbReference>
<dbReference type="CDD" id="cd00861">
    <property type="entry name" value="ProRS_anticodon_short"/>
    <property type="match status" value="1"/>
</dbReference>
<dbReference type="CDD" id="cd00779">
    <property type="entry name" value="ProRS_core_prok"/>
    <property type="match status" value="1"/>
</dbReference>
<dbReference type="FunFam" id="3.30.930.10:FF:000065">
    <property type="entry name" value="Proline--tRNA ligase"/>
    <property type="match status" value="1"/>
</dbReference>
<dbReference type="Gene3D" id="3.40.50.800">
    <property type="entry name" value="Anticodon-binding domain"/>
    <property type="match status" value="1"/>
</dbReference>
<dbReference type="Gene3D" id="3.30.930.10">
    <property type="entry name" value="Bira Bifunctional Protein, Domain 2"/>
    <property type="match status" value="2"/>
</dbReference>
<dbReference type="Gene3D" id="3.90.960.10">
    <property type="entry name" value="YbaK/aminoacyl-tRNA synthetase-associated domain"/>
    <property type="match status" value="1"/>
</dbReference>
<dbReference type="HAMAP" id="MF_01569">
    <property type="entry name" value="Pro_tRNA_synth_type1"/>
    <property type="match status" value="1"/>
</dbReference>
<dbReference type="InterPro" id="IPR002314">
    <property type="entry name" value="aa-tRNA-synt_IIb"/>
</dbReference>
<dbReference type="InterPro" id="IPR006195">
    <property type="entry name" value="aa-tRNA-synth_II"/>
</dbReference>
<dbReference type="InterPro" id="IPR045864">
    <property type="entry name" value="aa-tRNA-synth_II/BPL/LPL"/>
</dbReference>
<dbReference type="InterPro" id="IPR004154">
    <property type="entry name" value="Anticodon-bd"/>
</dbReference>
<dbReference type="InterPro" id="IPR036621">
    <property type="entry name" value="Anticodon-bd_dom_sf"/>
</dbReference>
<dbReference type="InterPro" id="IPR002316">
    <property type="entry name" value="Pro-tRNA-ligase_IIa"/>
</dbReference>
<dbReference type="InterPro" id="IPR004500">
    <property type="entry name" value="Pro-tRNA-synth_IIa_bac-type"/>
</dbReference>
<dbReference type="InterPro" id="IPR023717">
    <property type="entry name" value="Pro-tRNA-Synthase_IIa_type1"/>
</dbReference>
<dbReference type="InterPro" id="IPR050062">
    <property type="entry name" value="Pro-tRNA_synthetase"/>
</dbReference>
<dbReference type="InterPro" id="IPR044140">
    <property type="entry name" value="ProRS_anticodon_short"/>
</dbReference>
<dbReference type="InterPro" id="IPR033730">
    <property type="entry name" value="ProRS_core_prok"/>
</dbReference>
<dbReference type="InterPro" id="IPR036754">
    <property type="entry name" value="YbaK/aa-tRNA-synt-asso_dom_sf"/>
</dbReference>
<dbReference type="InterPro" id="IPR007214">
    <property type="entry name" value="YbaK/aa-tRNA-synth-assoc-dom"/>
</dbReference>
<dbReference type="NCBIfam" id="NF006625">
    <property type="entry name" value="PRK09194.1"/>
    <property type="match status" value="1"/>
</dbReference>
<dbReference type="NCBIfam" id="TIGR00409">
    <property type="entry name" value="proS_fam_II"/>
    <property type="match status" value="1"/>
</dbReference>
<dbReference type="PANTHER" id="PTHR42753">
    <property type="entry name" value="MITOCHONDRIAL RIBOSOME PROTEIN L39/PROLYL-TRNA LIGASE FAMILY MEMBER"/>
    <property type="match status" value="1"/>
</dbReference>
<dbReference type="PANTHER" id="PTHR42753:SF2">
    <property type="entry name" value="PROLINE--TRNA LIGASE"/>
    <property type="match status" value="1"/>
</dbReference>
<dbReference type="Pfam" id="PF03129">
    <property type="entry name" value="HGTP_anticodon"/>
    <property type="match status" value="1"/>
</dbReference>
<dbReference type="Pfam" id="PF00587">
    <property type="entry name" value="tRNA-synt_2b"/>
    <property type="match status" value="1"/>
</dbReference>
<dbReference type="Pfam" id="PF04073">
    <property type="entry name" value="tRNA_edit"/>
    <property type="match status" value="1"/>
</dbReference>
<dbReference type="PRINTS" id="PR01046">
    <property type="entry name" value="TRNASYNTHPRO"/>
</dbReference>
<dbReference type="SUPFAM" id="SSF52954">
    <property type="entry name" value="Class II aaRS ABD-related"/>
    <property type="match status" value="1"/>
</dbReference>
<dbReference type="SUPFAM" id="SSF55681">
    <property type="entry name" value="Class II aaRS and biotin synthetases"/>
    <property type="match status" value="1"/>
</dbReference>
<dbReference type="SUPFAM" id="SSF55826">
    <property type="entry name" value="YbaK/ProRS associated domain"/>
    <property type="match status" value="1"/>
</dbReference>
<dbReference type="PROSITE" id="PS50862">
    <property type="entry name" value="AA_TRNA_LIGASE_II"/>
    <property type="match status" value="1"/>
</dbReference>
<evidence type="ECO:0000255" key="1">
    <source>
        <dbReference type="HAMAP-Rule" id="MF_01569"/>
    </source>
</evidence>
<gene>
    <name evidence="1" type="primary">proS</name>
    <name type="ordered locus">ACP_2832</name>
</gene>
<organism>
    <name type="scientific">Acidobacterium capsulatum (strain ATCC 51196 / DSM 11244 / BCRC 80197 / JCM 7670 / NBRC 15755 / NCIMB 13165 / 161)</name>
    <dbReference type="NCBI Taxonomy" id="240015"/>
    <lineage>
        <taxon>Bacteria</taxon>
        <taxon>Pseudomonadati</taxon>
        <taxon>Acidobacteriota</taxon>
        <taxon>Terriglobia</taxon>
        <taxon>Terriglobales</taxon>
        <taxon>Acidobacteriaceae</taxon>
        <taxon>Acidobacterium</taxon>
    </lineage>
</organism>
<comment type="function">
    <text evidence="1">Catalyzes the attachment of proline to tRNA(Pro) in a two-step reaction: proline is first activated by ATP to form Pro-AMP and then transferred to the acceptor end of tRNA(Pro). As ProRS can inadvertently accommodate and process non-cognate amino acids such as alanine and cysteine, to avoid such errors it has two additional distinct editing activities against alanine. One activity is designated as 'pretransfer' editing and involves the tRNA(Pro)-independent hydrolysis of activated Ala-AMP. The other activity is designated 'posttransfer' editing and involves deacylation of mischarged Ala-tRNA(Pro). The misacylated Cys-tRNA(Pro) is not edited by ProRS.</text>
</comment>
<comment type="catalytic activity">
    <reaction evidence="1">
        <text>tRNA(Pro) + L-proline + ATP = L-prolyl-tRNA(Pro) + AMP + diphosphate</text>
        <dbReference type="Rhea" id="RHEA:14305"/>
        <dbReference type="Rhea" id="RHEA-COMP:9700"/>
        <dbReference type="Rhea" id="RHEA-COMP:9702"/>
        <dbReference type="ChEBI" id="CHEBI:30616"/>
        <dbReference type="ChEBI" id="CHEBI:33019"/>
        <dbReference type="ChEBI" id="CHEBI:60039"/>
        <dbReference type="ChEBI" id="CHEBI:78442"/>
        <dbReference type="ChEBI" id="CHEBI:78532"/>
        <dbReference type="ChEBI" id="CHEBI:456215"/>
        <dbReference type="EC" id="6.1.1.15"/>
    </reaction>
</comment>
<comment type="subunit">
    <text evidence="1">Homodimer.</text>
</comment>
<comment type="subcellular location">
    <subcellularLocation>
        <location evidence="1">Cytoplasm</location>
    </subcellularLocation>
</comment>
<comment type="domain">
    <text evidence="1">Consists of three domains: the N-terminal catalytic domain, the editing domain and the C-terminal anticodon-binding domain.</text>
</comment>
<comment type="similarity">
    <text evidence="1">Belongs to the class-II aminoacyl-tRNA synthetase family. ProS type 1 subfamily.</text>
</comment>
<name>SYP_ACIC5</name>
<protein>
    <recommendedName>
        <fullName evidence="1">Proline--tRNA ligase</fullName>
        <ecNumber evidence="1">6.1.1.15</ecNumber>
    </recommendedName>
    <alternativeName>
        <fullName evidence="1">Prolyl-tRNA synthetase</fullName>
        <shortName evidence="1">ProRS</shortName>
    </alternativeName>
</protein>
<reference key="1">
    <citation type="journal article" date="2009" name="Appl. Environ. Microbiol.">
        <title>Three genomes from the phylum Acidobacteria provide insight into the lifestyles of these microorganisms in soils.</title>
        <authorList>
            <person name="Ward N.L."/>
            <person name="Challacombe J.F."/>
            <person name="Janssen P.H."/>
            <person name="Henrissat B."/>
            <person name="Coutinho P.M."/>
            <person name="Wu M."/>
            <person name="Xie G."/>
            <person name="Haft D.H."/>
            <person name="Sait M."/>
            <person name="Badger J."/>
            <person name="Barabote R.D."/>
            <person name="Bradley B."/>
            <person name="Brettin T.S."/>
            <person name="Brinkac L.M."/>
            <person name="Bruce D."/>
            <person name="Creasy T."/>
            <person name="Daugherty S.C."/>
            <person name="Davidsen T.M."/>
            <person name="DeBoy R.T."/>
            <person name="Detter J.C."/>
            <person name="Dodson R.J."/>
            <person name="Durkin A.S."/>
            <person name="Ganapathy A."/>
            <person name="Gwinn-Giglio M."/>
            <person name="Han C.S."/>
            <person name="Khouri H."/>
            <person name="Kiss H."/>
            <person name="Kothari S.P."/>
            <person name="Madupu R."/>
            <person name="Nelson K.E."/>
            <person name="Nelson W.C."/>
            <person name="Paulsen I."/>
            <person name="Penn K."/>
            <person name="Ren Q."/>
            <person name="Rosovitz M.J."/>
            <person name="Selengut J.D."/>
            <person name="Shrivastava S."/>
            <person name="Sullivan S.A."/>
            <person name="Tapia R."/>
            <person name="Thompson L.S."/>
            <person name="Watkins K.L."/>
            <person name="Yang Q."/>
            <person name="Yu C."/>
            <person name="Zafar N."/>
            <person name="Zhou L."/>
            <person name="Kuske C.R."/>
        </authorList>
    </citation>
    <scope>NUCLEOTIDE SEQUENCE [LARGE SCALE GENOMIC DNA]</scope>
    <source>
        <strain>ATCC 51196 / DSM 11244 / BCRC 80197 / JCM 7670 / NBRC 15755 / NCIMB 13165 / 161</strain>
    </source>
</reference>
<proteinExistence type="inferred from homology"/>
<feature type="chain" id="PRO_1000185481" description="Proline--tRNA ligase">
    <location>
        <begin position="1"/>
        <end position="585"/>
    </location>
</feature>
<keyword id="KW-0030">Aminoacyl-tRNA synthetase</keyword>
<keyword id="KW-0067">ATP-binding</keyword>
<keyword id="KW-0963">Cytoplasm</keyword>
<keyword id="KW-0436">Ligase</keyword>
<keyword id="KW-0547">Nucleotide-binding</keyword>
<keyword id="KW-0648">Protein biosynthesis</keyword>
<keyword id="KW-1185">Reference proteome</keyword>
<accession>C1F3P3</accession>